<reference key="1">
    <citation type="journal article" date="1992" name="Nature">
        <title>The complete DNA sequence of yeast chromosome III.</title>
        <authorList>
            <person name="Oliver S.G."/>
            <person name="van der Aart Q.J.M."/>
            <person name="Agostoni-Carbone M.L."/>
            <person name="Aigle M."/>
            <person name="Alberghina L."/>
            <person name="Alexandraki D."/>
            <person name="Antoine G."/>
            <person name="Anwar R."/>
            <person name="Ballesta J.P.G."/>
            <person name="Benit P."/>
            <person name="Berben G."/>
            <person name="Bergantino E."/>
            <person name="Biteau N."/>
            <person name="Bolle P.-A."/>
            <person name="Bolotin-Fukuhara M."/>
            <person name="Brown A."/>
            <person name="Brown A.J.P."/>
            <person name="Buhler J.-M."/>
            <person name="Carcano C."/>
            <person name="Carignani G."/>
            <person name="Cederberg H."/>
            <person name="Chanet R."/>
            <person name="Contreras R."/>
            <person name="Crouzet M."/>
            <person name="Daignan-Fornier B."/>
            <person name="Defoor E."/>
            <person name="Delgado M.D."/>
            <person name="Demolder J."/>
            <person name="Doira C."/>
            <person name="Dubois E."/>
            <person name="Dujon B."/>
            <person name="Duesterhoeft A."/>
            <person name="Erdmann D."/>
            <person name="Esteban M."/>
            <person name="Fabre F."/>
            <person name="Fairhead C."/>
            <person name="Faye G."/>
            <person name="Feldmann H."/>
            <person name="Fiers W."/>
            <person name="Francingues-Gaillard M.-C."/>
            <person name="Franco L."/>
            <person name="Frontali L."/>
            <person name="Fukuhara H."/>
            <person name="Fuller L.J."/>
            <person name="Galland P."/>
            <person name="Gent M.E."/>
            <person name="Gigot D."/>
            <person name="Gilliquet V."/>
            <person name="Glansdorff N."/>
            <person name="Goffeau A."/>
            <person name="Grenson M."/>
            <person name="Grisanti P."/>
            <person name="Grivell L.A."/>
            <person name="de Haan M."/>
            <person name="Haasemann M."/>
            <person name="Hatat D."/>
            <person name="Hoenicka J."/>
            <person name="Hegemann J.H."/>
            <person name="Herbert C.J."/>
            <person name="Hilger F."/>
            <person name="Hohmann S."/>
            <person name="Hollenberg C.P."/>
            <person name="Huse K."/>
            <person name="Iborra F."/>
            <person name="Indge K.J."/>
            <person name="Isono K."/>
            <person name="Jacq C."/>
            <person name="Jacquet M."/>
            <person name="James C.M."/>
            <person name="Jauniaux J.-C."/>
            <person name="Jia Y."/>
            <person name="Jimenez A."/>
            <person name="Kelly A."/>
            <person name="Kleinhans U."/>
            <person name="Kreisl P."/>
            <person name="Lanfranchi G."/>
            <person name="Lewis C."/>
            <person name="van der Linden C.G."/>
            <person name="Lucchini G."/>
            <person name="Lutzenkirchen K."/>
            <person name="Maat M.J."/>
            <person name="Mallet L."/>
            <person name="Mannhaupt G."/>
            <person name="Martegani E."/>
            <person name="Mathieu A."/>
            <person name="Maurer C.T.C."/>
            <person name="McConnell D."/>
            <person name="McKee R.A."/>
            <person name="Messenguy F."/>
            <person name="Mewes H.-W."/>
            <person name="Molemans F."/>
            <person name="Montague M.A."/>
            <person name="Muzi Falconi M."/>
            <person name="Navas L."/>
            <person name="Newlon C.S."/>
            <person name="Noone D."/>
            <person name="Pallier C."/>
            <person name="Panzeri L."/>
            <person name="Pearson B.M."/>
            <person name="Perea J."/>
            <person name="Philippsen P."/>
            <person name="Pierard A."/>
            <person name="Planta R.J."/>
            <person name="Plevani P."/>
            <person name="Poetsch B."/>
            <person name="Pohl F.M."/>
            <person name="Purnelle B."/>
            <person name="Ramezani Rad M."/>
            <person name="Rasmussen S.W."/>
            <person name="Raynal A."/>
            <person name="Remacha M.A."/>
            <person name="Richterich P."/>
            <person name="Roberts A.B."/>
            <person name="Rodriguez F."/>
            <person name="Sanz E."/>
            <person name="Schaaff-Gerstenschlaeger I."/>
            <person name="Scherens B."/>
            <person name="Schweitzer B."/>
            <person name="Shu Y."/>
            <person name="Skala J."/>
            <person name="Slonimski P.P."/>
            <person name="Sor F."/>
            <person name="Soustelle C."/>
            <person name="Spiegelberg R."/>
            <person name="Stateva L.I."/>
            <person name="Steensma H.Y."/>
            <person name="Steiner S."/>
            <person name="Thierry A."/>
            <person name="Thireos G."/>
            <person name="Tzermia M."/>
            <person name="Urrestarazu L.A."/>
            <person name="Valle G."/>
            <person name="Vetter I."/>
            <person name="van Vliet-Reedijk J.C."/>
            <person name="Voet M."/>
            <person name="Volckaert G."/>
            <person name="Vreken P."/>
            <person name="Wang H."/>
            <person name="Warmington J.R."/>
            <person name="von Wettstein D."/>
            <person name="Wicksteed B.L."/>
            <person name="Wilson C."/>
            <person name="Wurst H."/>
            <person name="Xu G."/>
            <person name="Yoshikawa A."/>
            <person name="Zimmermann F.K."/>
            <person name="Sgouros J.G."/>
        </authorList>
    </citation>
    <scope>NUCLEOTIDE SEQUENCE [LARGE SCALE GENOMIC DNA]</scope>
    <source>
        <strain>ATCC 204508 / S288c</strain>
    </source>
</reference>
<reference key="2">
    <citation type="journal article" date="2014" name="G3 (Bethesda)">
        <title>The reference genome sequence of Saccharomyces cerevisiae: Then and now.</title>
        <authorList>
            <person name="Engel S.R."/>
            <person name="Dietrich F.S."/>
            <person name="Fisk D.G."/>
            <person name="Binkley G."/>
            <person name="Balakrishnan R."/>
            <person name="Costanzo M.C."/>
            <person name="Dwight S.S."/>
            <person name="Hitz B.C."/>
            <person name="Karra K."/>
            <person name="Nash R.S."/>
            <person name="Weng S."/>
            <person name="Wong E.D."/>
            <person name="Lloyd P."/>
            <person name="Skrzypek M.S."/>
            <person name="Miyasato S.R."/>
            <person name="Simison M."/>
            <person name="Cherry J.M."/>
        </authorList>
    </citation>
    <scope>GENOME REANNOTATION</scope>
    <source>
        <strain>ATCC 204508 / S288c</strain>
    </source>
</reference>
<protein>
    <recommendedName>
        <fullName>Uncharacterized protein YCR050C</fullName>
    </recommendedName>
</protein>
<keyword id="KW-1185">Reference proteome</keyword>
<sequence>MVAVHKVRYNVIMILGPEQTPNEKTTLDNCGLARRNLVLLKAVHTNCDSWNMNRYPLTLLKMANMAISWNTALKKKVNNVAWLLLKCNAPMELWYTCLSKNL</sequence>
<name>YCU0_YEAST</name>
<organism>
    <name type="scientific">Saccharomyces cerevisiae (strain ATCC 204508 / S288c)</name>
    <name type="common">Baker's yeast</name>
    <dbReference type="NCBI Taxonomy" id="559292"/>
    <lineage>
        <taxon>Eukaryota</taxon>
        <taxon>Fungi</taxon>
        <taxon>Dikarya</taxon>
        <taxon>Ascomycota</taxon>
        <taxon>Saccharomycotina</taxon>
        <taxon>Saccharomycetes</taxon>
        <taxon>Saccharomycetales</taxon>
        <taxon>Saccharomycetaceae</taxon>
        <taxon>Saccharomyces</taxon>
    </lineage>
</organism>
<accession>P25630</accession>
<accession>D6VR58</accession>
<gene>
    <name type="ordered locus">YCR050C</name>
    <name type="ORF">YCR50C</name>
</gene>
<dbReference type="EMBL" id="X59720">
    <property type="protein sequence ID" value="CAA42298.1"/>
    <property type="molecule type" value="Genomic_DNA"/>
</dbReference>
<dbReference type="EMBL" id="BK006937">
    <property type="protein sequence ID" value="DAA07527.1"/>
    <property type="molecule type" value="Genomic_DNA"/>
</dbReference>
<dbReference type="PIR" id="S19464">
    <property type="entry name" value="S19464"/>
</dbReference>
<dbReference type="RefSeq" id="NP_009979.1">
    <property type="nucleotide sequence ID" value="NM_001178764.1"/>
</dbReference>
<dbReference type="BioGRID" id="300347">
    <property type="interactions" value="52"/>
</dbReference>
<dbReference type="DIP" id="DIP-1247N"/>
<dbReference type="FunCoup" id="P25630">
    <property type="interactions" value="51"/>
</dbReference>
<dbReference type="IntAct" id="P25630">
    <property type="interactions" value="2"/>
</dbReference>
<dbReference type="MINT" id="P25630"/>
<dbReference type="PaxDb" id="4932-YCR050C"/>
<dbReference type="EnsemblFungi" id="YCR050C_mRNA">
    <property type="protein sequence ID" value="YCR050C"/>
    <property type="gene ID" value="YCR050C"/>
</dbReference>
<dbReference type="GeneID" id="850417"/>
<dbReference type="KEGG" id="sce:YCR050C"/>
<dbReference type="AGR" id="SGD:S000000646"/>
<dbReference type="SGD" id="S000000646">
    <property type="gene designation" value="YCR050C"/>
</dbReference>
<dbReference type="VEuPathDB" id="FungiDB:YCR050C"/>
<dbReference type="HOGENOM" id="CLU_2279080_0_0_1"/>
<dbReference type="InParanoid" id="P25630"/>
<dbReference type="OrthoDB" id="10464456at2759"/>
<dbReference type="BioCyc" id="YEAST:G3O-29359-MONOMER"/>
<dbReference type="BioGRID-ORCS" id="850417">
    <property type="hits" value="1 hit in 10 CRISPR screens"/>
</dbReference>
<dbReference type="PRO" id="PR:P25630"/>
<dbReference type="Proteomes" id="UP000002311">
    <property type="component" value="Chromosome III"/>
</dbReference>
<dbReference type="RNAct" id="P25630">
    <property type="molecule type" value="protein"/>
</dbReference>
<feature type="chain" id="PRO_0000202571" description="Uncharacterized protein YCR050C">
    <location>
        <begin position="1"/>
        <end position="102"/>
    </location>
</feature>
<proteinExistence type="predicted"/>